<organism>
    <name type="scientific">Influenza A virus (strain A/USSR/90/1977 H1N1)</name>
    <dbReference type="NCBI Taxonomy" id="381516"/>
    <lineage>
        <taxon>Viruses</taxon>
        <taxon>Riboviria</taxon>
        <taxon>Orthornavirae</taxon>
        <taxon>Negarnaviricota</taxon>
        <taxon>Polyploviricotina</taxon>
        <taxon>Insthoviricetes</taxon>
        <taxon>Articulavirales</taxon>
        <taxon>Orthomyxoviridae</taxon>
        <taxon>Alphainfluenzavirus</taxon>
        <taxon>Alphainfluenzavirus influenzae</taxon>
        <taxon>Influenza A virus</taxon>
    </lineage>
</organism>
<keyword id="KW-1157">Cap snatching</keyword>
<keyword id="KW-0255">Endonuclease</keyword>
<keyword id="KW-1262">Eukaryotic host gene expression shutoff by virus</keyword>
<keyword id="KW-1191">Eukaryotic host transcription shutoff by virus</keyword>
<keyword id="KW-1035">Host cytoplasm</keyword>
<keyword id="KW-1190">Host gene expression shutoff by virus</keyword>
<keyword id="KW-1048">Host nucleus</keyword>
<keyword id="KW-0945">Host-virus interaction</keyword>
<keyword id="KW-0378">Hydrolase</keyword>
<keyword id="KW-1104">Inhibition of host RNA polymerase II by virus</keyword>
<keyword id="KW-0464">Manganese</keyword>
<keyword id="KW-0479">Metal-binding</keyword>
<keyword id="KW-0540">Nuclease</keyword>
<keyword id="KW-0597">Phosphoprotein</keyword>
<keyword id="KW-0688">Ribosomal frameshifting</keyword>
<feature type="chain" id="PRO_0000279267" description="Polymerase acidic protein">
    <location>
        <begin position="1"/>
        <end position="716"/>
    </location>
</feature>
<feature type="short sequence motif" description="Nuclear localization signal 1 (NLS1)" evidence="1 2">
    <location>
        <begin position="124"/>
        <end position="139"/>
    </location>
</feature>
<feature type="short sequence motif" description="Nuclear localization signal 2 (NLS2)" evidence="1 2">
    <location>
        <begin position="184"/>
        <end position="247"/>
    </location>
</feature>
<feature type="binding site" evidence="2">
    <location>
        <position position="41"/>
    </location>
    <ligand>
        <name>Mn(2+)</name>
        <dbReference type="ChEBI" id="CHEBI:29035"/>
        <label>1</label>
    </ligand>
</feature>
<feature type="binding site" evidence="2">
    <location>
        <position position="80"/>
    </location>
    <ligand>
        <name>Mn(2+)</name>
        <dbReference type="ChEBI" id="CHEBI:29035"/>
        <label>2</label>
    </ligand>
</feature>
<feature type="binding site" evidence="2">
    <location>
        <position position="108"/>
    </location>
    <ligand>
        <name>Mn(2+)</name>
        <dbReference type="ChEBI" id="CHEBI:29035"/>
        <label>1</label>
    </ligand>
</feature>
<feature type="binding site" evidence="2">
    <location>
        <position position="108"/>
    </location>
    <ligand>
        <name>Mn(2+)</name>
        <dbReference type="ChEBI" id="CHEBI:29035"/>
        <label>2</label>
    </ligand>
</feature>
<feature type="binding site" evidence="2">
    <location>
        <position position="119"/>
    </location>
    <ligand>
        <name>Mn(2+)</name>
        <dbReference type="ChEBI" id="CHEBI:29035"/>
        <label>1</label>
    </ligand>
</feature>
<feature type="binding site" evidence="2">
    <location>
        <position position="120"/>
    </location>
    <ligand>
        <name>Mn(2+)</name>
        <dbReference type="ChEBI" id="CHEBI:29035"/>
        <label>1</label>
    </ligand>
</feature>
<evidence type="ECO:0000250" key="1">
    <source>
        <dbReference type="UniProtKB" id="P03433"/>
    </source>
</evidence>
<evidence type="ECO:0000255" key="2">
    <source>
        <dbReference type="HAMAP-Rule" id="MF_04063"/>
    </source>
</evidence>
<comment type="function">
    <text evidence="2">Plays an essential role in viral RNA transcription and replication by forming the heterotrimeric polymerase complex together with PB1 and PB2 subunits. The complex transcribes viral mRNAs by using a unique mechanism called cap-snatching. It consists in the hijacking and cleavage of host capped pre-mRNAs. These short capped RNAs are then used as primers for viral mRNAs. The PB2 subunit is responsible for the binding of the 5' cap of cellular pre-mRNAs which are subsequently cleaved after 10-13 nucleotides by the PA subunit that carries the endonuclease activity.</text>
</comment>
<comment type="cofactor">
    <cofactor evidence="2">
        <name>Mn(2+)</name>
        <dbReference type="ChEBI" id="CHEBI:29035"/>
    </cofactor>
    <text evidence="2">Binds 2 manganese ions per subunit.</text>
</comment>
<comment type="subunit">
    <text evidence="1 2">Influenza RNA polymerase is composed of three subunits: PB1, PB2 and PA. Interacts (via C-terminus) with PB1 (via N-terminus).</text>
</comment>
<comment type="subcellular location">
    <subcellularLocation>
        <location evidence="2">Host cytoplasm</location>
    </subcellularLocation>
    <subcellularLocation>
        <location evidence="2">Host nucleus</location>
    </subcellularLocation>
    <text evidence="1 2">PB1 and PA are transported in the host nucleus as a complex.</text>
</comment>
<comment type="alternative products">
    <event type="ribosomal frameshifting"/>
    <isoform>
        <id>Q1WP02-1</id>
        <name>PA</name>
        <sequence type="displayed"/>
    </isoform>
    <isoform>
        <id>P0DJW7-1</id>
        <name>PA-X</name>
        <sequence type="external"/>
    </isoform>
</comment>
<comment type="PTM">
    <text evidence="1 2">Phosphorylated on serines and threonines by host kinases, including human casein kinase II.</text>
</comment>
<comment type="similarity">
    <text evidence="2">Belongs to the influenza viruses PA family.</text>
</comment>
<accession>Q1WP02</accession>
<sequence length="716" mass="82834">MEDFVRQCFNPMIVELAEKAMKEYGEDLKIETNKFAAICTHLEVCFMYSDFHFINEQGESIIVELDDPNALLKHRFEIIEGRDRTMAWTVVNSICNTTGAEKPKFLPDLYDYKENRFIEIGVTRREVHIYYLEKANKIKSEKTHIHIFSFTGEEMATKADYTLDEESRARIKTRLFTIRQEMASRGLWDSFRQSERGEETIEERFEITGTMRRLADQSLPPNFSCLENFRAYVDGFEPNGYIEGKLSQMSKEVNARIEPFLKTTPRPIRLPDGPPCSQRSKFLLMDALKLSIEDPSHEGEGIPLYDAIKCMRTFFGWKEPYVVKPHEKGINPNYLLSWKQVLAELQDIENEEKIPRTKNMKKTSQLKWALGENMAPEKVDFDDCKDISDLKQYDSDEPELRSLSSWIQNEFNKACELTDSIWIELDEIGEDVAPIEHIASMRRNYFTAEVSHCRATEYIMKGVYINTALLNASCAAMDDFQLIPMISKCRTKEGRRKTNLYGFIIKGRSHLRNDTDVVNFVSMEFSLTDPRLEPHKWEKYCVLEIGDMLLRSAIGQVSRPMFLYVRTNGTSKIKMKWGMEMRRCLLQSLQQIESMIEAESSVKEKDMTKEFFENKSETWPIGESPKGVEEGSIGKVCRTLLAKSVFNSLYASPQLEGFSAESRKLLLVVQALRDNLEPGTFDLGGLYEAIEECLINDPWVLLNASWFNSFLTHALR</sequence>
<reference key="1">
    <citation type="submission" date="2006-03" db="EMBL/GenBank/DDBJ databases">
        <title>The NIAID influenza genome sequencing project.</title>
        <authorList>
            <person name="Ghedin E."/>
            <person name="Spiro D."/>
            <person name="Miller N."/>
            <person name="Zaborsky J."/>
            <person name="Feldblyum T."/>
            <person name="Subbu V."/>
            <person name="Shumway M."/>
            <person name="Sparenborg J."/>
            <person name="Groveman L."/>
            <person name="Halpin R."/>
            <person name="Sitz J."/>
            <person name="Koo H."/>
            <person name="Salzberg S.L."/>
            <person name="Webster R.G."/>
            <person name="Hoffmann E."/>
            <person name="Krauss S."/>
            <person name="Naeve C."/>
            <person name="Bao Y."/>
            <person name="Bolotov P."/>
            <person name="Dernovoy D."/>
            <person name="Kiryutin B."/>
            <person name="Lipman D.J."/>
            <person name="Tatusova T."/>
        </authorList>
    </citation>
    <scope>NUCLEOTIDE SEQUENCE [GENOMIC RNA]</scope>
</reference>
<reference key="2">
    <citation type="submission" date="2006-04" db="EMBL/GenBank/DDBJ databases">
        <title>Complete genome sequencing and analysis of selected influenza virus vaccine strains spanning six decades (1933-1999).</title>
        <authorList>
            <person name="Mbawuike I.N."/>
            <person name="Zhang Y."/>
            <person name="Yamada R.E."/>
            <person name="Nino D."/>
            <person name="Bui H.-H."/>
            <person name="Sette A."/>
            <person name="Couch R.B."/>
        </authorList>
    </citation>
    <scope>NUCLEOTIDE SEQUENCE [GENOMIC RNA]</scope>
</reference>
<proteinExistence type="inferred from homology"/>
<organismHost>
    <name type="scientific">Aves</name>
    <dbReference type="NCBI Taxonomy" id="8782"/>
</organismHost>
<organismHost>
    <name type="scientific">Homo sapiens</name>
    <name type="common">Human</name>
    <dbReference type="NCBI Taxonomy" id="9606"/>
</organismHost>
<organismHost>
    <name type="scientific">Sus scrofa</name>
    <name type="common">Pig</name>
    <dbReference type="NCBI Taxonomy" id="9823"/>
</organismHost>
<gene>
    <name evidence="2" type="primary">PA</name>
</gene>
<protein>
    <recommendedName>
        <fullName evidence="2">Polymerase acidic protein</fullName>
        <ecNumber evidence="2">3.1.-.-</ecNumber>
    </recommendedName>
    <alternativeName>
        <fullName evidence="2">RNA-directed RNA polymerase subunit P2</fullName>
    </alternativeName>
</protein>
<dbReference type="EC" id="3.1.-.-" evidence="2"/>
<dbReference type="EMBL" id="CY010377">
    <property type="protein sequence ID" value="ABD95357.1"/>
    <property type="molecule type" value="Genomic_RNA"/>
</dbReference>
<dbReference type="EMBL" id="DQ508896">
    <property type="protein sequence ID" value="ABF21263.1"/>
    <property type="molecule type" value="Genomic_RNA"/>
</dbReference>
<dbReference type="SMR" id="Q1WP02"/>
<dbReference type="MEROPS" id="S62.001"/>
<dbReference type="Proteomes" id="UP000007793">
    <property type="component" value="Genome"/>
</dbReference>
<dbReference type="Proteomes" id="UP000121508">
    <property type="component" value="Genome"/>
</dbReference>
<dbReference type="GO" id="GO:0030430">
    <property type="term" value="C:host cell cytoplasm"/>
    <property type="evidence" value="ECO:0007669"/>
    <property type="project" value="UniProtKB-SubCell"/>
</dbReference>
<dbReference type="GO" id="GO:0042025">
    <property type="term" value="C:host cell nucleus"/>
    <property type="evidence" value="ECO:0007669"/>
    <property type="project" value="UniProtKB-SubCell"/>
</dbReference>
<dbReference type="GO" id="GO:0004519">
    <property type="term" value="F:endonuclease activity"/>
    <property type="evidence" value="ECO:0007669"/>
    <property type="project" value="UniProtKB-KW"/>
</dbReference>
<dbReference type="GO" id="GO:0046872">
    <property type="term" value="F:metal ion binding"/>
    <property type="evidence" value="ECO:0007669"/>
    <property type="project" value="UniProtKB-KW"/>
</dbReference>
<dbReference type="GO" id="GO:0003723">
    <property type="term" value="F:RNA binding"/>
    <property type="evidence" value="ECO:0007669"/>
    <property type="project" value="UniProtKB-UniRule"/>
</dbReference>
<dbReference type="GO" id="GO:0075526">
    <property type="term" value="P:cap snatching"/>
    <property type="evidence" value="ECO:0007669"/>
    <property type="project" value="UniProtKB-UniRule"/>
</dbReference>
<dbReference type="GO" id="GO:0006351">
    <property type="term" value="P:DNA-templated transcription"/>
    <property type="evidence" value="ECO:0007669"/>
    <property type="project" value="UniProtKB-UniRule"/>
</dbReference>
<dbReference type="GO" id="GO:0039657">
    <property type="term" value="P:symbiont-mediated suppression of host gene expression"/>
    <property type="evidence" value="ECO:0007669"/>
    <property type="project" value="UniProtKB-KW"/>
</dbReference>
<dbReference type="GO" id="GO:0039523">
    <property type="term" value="P:symbiont-mediated suppression of host mRNA transcription via inhibition of RNA polymerase II activity"/>
    <property type="evidence" value="ECO:0007669"/>
    <property type="project" value="UniProtKB-UniRule"/>
</dbReference>
<dbReference type="GO" id="GO:0039694">
    <property type="term" value="P:viral RNA genome replication"/>
    <property type="evidence" value="ECO:0007669"/>
    <property type="project" value="InterPro"/>
</dbReference>
<dbReference type="GO" id="GO:0075523">
    <property type="term" value="P:viral translational frameshifting"/>
    <property type="evidence" value="ECO:0007669"/>
    <property type="project" value="UniProtKB-KW"/>
</dbReference>
<dbReference type="FunFam" id="3.40.91.90:FF:000001">
    <property type="entry name" value="Polymerase acidic protein"/>
    <property type="match status" value="1"/>
</dbReference>
<dbReference type="Gene3D" id="3.40.91.90">
    <property type="entry name" value="Influenza RNA-dependent RNA polymerase subunit PA, endonuclease domain"/>
    <property type="match status" value="1"/>
</dbReference>
<dbReference type="HAMAP" id="MF_04063">
    <property type="entry name" value="INFV_PA"/>
    <property type="match status" value="1"/>
</dbReference>
<dbReference type="InterPro" id="IPR037534">
    <property type="entry name" value="INFV_PA"/>
</dbReference>
<dbReference type="InterPro" id="IPR001009">
    <property type="entry name" value="PA/PA-X"/>
</dbReference>
<dbReference type="InterPro" id="IPR038372">
    <property type="entry name" value="PA/PA-X_sf"/>
</dbReference>
<dbReference type="Pfam" id="PF00603">
    <property type="entry name" value="Flu_PA"/>
    <property type="match status" value="1"/>
</dbReference>
<name>PA_I77AB</name>